<protein>
    <recommendedName>
        <fullName>Malonyl CoA-acyl carrier protein transacylase</fullName>
        <shortName>MCT</shortName>
        <ecNumber>2.3.1.39</ecNumber>
    </recommendedName>
</protein>
<proteinExistence type="evidence at protein level"/>
<accession>P9WNG5</accession>
<accession>L0TAL7</accession>
<accession>P63458</accession>
<accession>Q10501</accession>
<organism>
    <name type="scientific">Mycobacterium tuberculosis (strain ATCC 25618 / H37Rv)</name>
    <dbReference type="NCBI Taxonomy" id="83332"/>
    <lineage>
        <taxon>Bacteria</taxon>
        <taxon>Bacillati</taxon>
        <taxon>Actinomycetota</taxon>
        <taxon>Actinomycetes</taxon>
        <taxon>Mycobacteriales</taxon>
        <taxon>Mycobacteriaceae</taxon>
        <taxon>Mycobacterium</taxon>
        <taxon>Mycobacterium tuberculosis complex</taxon>
    </lineage>
</organism>
<gene>
    <name type="primary">fabD</name>
    <name type="ordered locus">Rv2243</name>
    <name type="ORF">MTCY427.24</name>
</gene>
<reference key="1">
    <citation type="journal article" date="1998" name="Nature">
        <title>Deciphering the biology of Mycobacterium tuberculosis from the complete genome sequence.</title>
        <authorList>
            <person name="Cole S.T."/>
            <person name="Brosch R."/>
            <person name="Parkhill J."/>
            <person name="Garnier T."/>
            <person name="Churcher C.M."/>
            <person name="Harris D.E."/>
            <person name="Gordon S.V."/>
            <person name="Eiglmeier K."/>
            <person name="Gas S."/>
            <person name="Barry C.E. III"/>
            <person name="Tekaia F."/>
            <person name="Badcock K."/>
            <person name="Basham D."/>
            <person name="Brown D."/>
            <person name="Chillingworth T."/>
            <person name="Connor R."/>
            <person name="Davies R.M."/>
            <person name="Devlin K."/>
            <person name="Feltwell T."/>
            <person name="Gentles S."/>
            <person name="Hamlin N."/>
            <person name="Holroyd S."/>
            <person name="Hornsby T."/>
            <person name="Jagels K."/>
            <person name="Krogh A."/>
            <person name="McLean J."/>
            <person name="Moule S."/>
            <person name="Murphy L.D."/>
            <person name="Oliver S."/>
            <person name="Osborne J."/>
            <person name="Quail M.A."/>
            <person name="Rajandream M.A."/>
            <person name="Rogers J."/>
            <person name="Rutter S."/>
            <person name="Seeger K."/>
            <person name="Skelton S."/>
            <person name="Squares S."/>
            <person name="Squares R."/>
            <person name="Sulston J.E."/>
            <person name="Taylor K."/>
            <person name="Whitehead S."/>
            <person name="Barrell B.G."/>
        </authorList>
    </citation>
    <scope>NUCLEOTIDE SEQUENCE [LARGE SCALE GENOMIC DNA]</scope>
    <source>
        <strain>ATCC 25618 / H37Rv</strain>
    </source>
</reference>
<reference key="2">
    <citation type="journal article" date="2006" name="EMBO J.">
        <title>Identification of substrates of the Mycobacterium tuberculosis proteasome.</title>
        <authorList>
            <person name="Pearce M.J."/>
            <person name="Arora P."/>
            <person name="Festa R.A."/>
            <person name="Butler-Wu S.M."/>
            <person name="Gokhale R.S."/>
            <person name="Darwin K.H."/>
        </authorList>
    </citation>
    <scope>PROTEASOME SUBSTRATE</scope>
    <source>
        <strain>ATCC 25618 / H37Rv</strain>
    </source>
</reference>
<reference key="3">
    <citation type="journal article" date="2008" name="Science">
        <title>Ubiquitin-like protein involved in the proteasome pathway of Mycobacterium tuberculosis.</title>
        <authorList>
            <person name="Pearce M.J."/>
            <person name="Mintseris J."/>
            <person name="Ferreyra J."/>
            <person name="Gygi S.P."/>
            <person name="Darwin K.H."/>
        </authorList>
    </citation>
    <scope>PUPYLATION AT LYS-173</scope>
    <scope>MUTAGENESIS OF LYS-173</scope>
    <scope>IDENTIFICATION BY MASS SPECTROMETRY</scope>
    <source>
        <strain>ATCC 25618 / H37Rv</strain>
    </source>
</reference>
<reference key="4">
    <citation type="journal article" date="2008" name="BMC Syst. Biol.">
        <title>targetTB: a target identification pipeline for Mycobacterium tuberculosis through an interactome, reactome and genome-scale structural analysis.</title>
        <authorList>
            <person name="Raman K."/>
            <person name="Yeturu K."/>
            <person name="Chandra N."/>
        </authorList>
    </citation>
    <scope>IDENTIFICATION AS A DRUG TARGET [LARGE SCALE ANALYSIS]</scope>
</reference>
<reference key="5">
    <citation type="journal article" date="2010" name="PLoS ONE">
        <title>Prokaryotic ubiquitin-like protein (Pup) proteome of Mycobacterium tuberculosis.</title>
        <authorList>
            <person name="Festa R.A."/>
            <person name="McAllister F."/>
            <person name="Pearce M.J."/>
            <person name="Mintseris J."/>
            <person name="Burns K.E."/>
            <person name="Gygi S.P."/>
            <person name="Darwin K.H."/>
        </authorList>
    </citation>
    <scope>PUPYLATION AT LYS-173</scope>
    <scope>IDENTIFICATION BY MASS SPECTROMETRY</scope>
    <source>
        <strain>ATCC 25618 / H37Rv</strain>
    </source>
</reference>
<reference key="6">
    <citation type="journal article" date="2011" name="Mol. Cell. Proteomics">
        <title>Proteogenomic analysis of Mycobacterium tuberculosis by high resolution mass spectrometry.</title>
        <authorList>
            <person name="Kelkar D.S."/>
            <person name="Kumar D."/>
            <person name="Kumar P."/>
            <person name="Balakrishnan L."/>
            <person name="Muthusamy B."/>
            <person name="Yadav A.K."/>
            <person name="Shrivastava P."/>
            <person name="Marimuthu A."/>
            <person name="Anand S."/>
            <person name="Sundaram H."/>
            <person name="Kingsbury R."/>
            <person name="Harsha H.C."/>
            <person name="Nair B."/>
            <person name="Prasad T.S."/>
            <person name="Chauhan D.S."/>
            <person name="Katoch K."/>
            <person name="Katoch V.M."/>
            <person name="Kumar P."/>
            <person name="Chaerkady R."/>
            <person name="Ramachandran S."/>
            <person name="Dash D."/>
            <person name="Pandey A."/>
        </authorList>
    </citation>
    <scope>IDENTIFICATION BY MASS SPECTROMETRY [LARGE SCALE ANALYSIS]</scope>
    <source>
        <strain>ATCC 25618 / H37Rv</strain>
    </source>
</reference>
<keyword id="KW-0002">3D-structure</keyword>
<keyword id="KW-0012">Acyltransferase</keyword>
<keyword id="KW-0275">Fatty acid biosynthesis</keyword>
<keyword id="KW-0276">Fatty acid metabolism</keyword>
<keyword id="KW-1017">Isopeptide bond</keyword>
<keyword id="KW-0444">Lipid biosynthesis</keyword>
<keyword id="KW-0443">Lipid metabolism</keyword>
<keyword id="KW-1185">Reference proteome</keyword>
<keyword id="KW-0808">Transferase</keyword>
<keyword id="KW-0832">Ubl conjugation</keyword>
<feature type="chain" id="PRO_0000194218" description="Malonyl CoA-acyl carrier protein transacylase">
    <location>
        <begin position="1"/>
        <end position="302"/>
    </location>
</feature>
<feature type="active site" evidence="1">
    <location>
        <position position="91"/>
    </location>
</feature>
<feature type="active site" evidence="1">
    <location>
        <position position="194"/>
    </location>
</feature>
<feature type="cross-link" description="Isoglutamyl lysine isopeptide (Lys-Gln) (interchain with Q-Cter in protein Pup)" evidence="2 3">
    <location>
        <position position="173"/>
    </location>
</feature>
<feature type="mutagenesis site" description="Nearly abolishes pupylation and dramatically stabilizes this proteasome substrate in wild-type mycobacteria." evidence="2">
    <original>K</original>
    <variation>A</variation>
    <location>
        <position position="173"/>
    </location>
</feature>
<feature type="strand" evidence="5">
    <location>
        <begin position="1"/>
        <end position="6"/>
    </location>
</feature>
<feature type="turn" evidence="5">
    <location>
        <begin position="14"/>
        <end position="22"/>
    </location>
</feature>
<feature type="helix" evidence="5">
    <location>
        <begin position="26"/>
        <end position="36"/>
    </location>
</feature>
<feature type="helix" evidence="5">
    <location>
        <begin position="41"/>
        <end position="46"/>
    </location>
</feature>
<feature type="helix" evidence="5">
    <location>
        <begin position="50"/>
        <end position="53"/>
    </location>
</feature>
<feature type="helix" evidence="5">
    <location>
        <begin position="56"/>
        <end position="76"/>
    </location>
</feature>
<feature type="turn" evidence="5">
    <location>
        <begin position="77"/>
        <end position="82"/>
    </location>
</feature>
<feature type="strand" evidence="5">
    <location>
        <begin position="85"/>
        <end position="89"/>
    </location>
</feature>
<feature type="helix" evidence="5">
    <location>
        <begin position="93"/>
        <end position="100"/>
    </location>
</feature>
<feature type="helix" evidence="5">
    <location>
        <begin position="106"/>
        <end position="124"/>
    </location>
</feature>
<feature type="strand" evidence="5">
    <location>
        <begin position="129"/>
        <end position="137"/>
    </location>
</feature>
<feature type="helix" evidence="5">
    <location>
        <begin position="139"/>
        <end position="148"/>
    </location>
</feature>
<feature type="strand" evidence="5">
    <location>
        <begin position="152"/>
        <end position="158"/>
    </location>
</feature>
<feature type="strand" evidence="5">
    <location>
        <begin position="161"/>
        <end position="167"/>
    </location>
</feature>
<feature type="helix" evidence="5">
    <location>
        <begin position="168"/>
        <end position="176"/>
    </location>
</feature>
<feature type="strand" evidence="5">
    <location>
        <begin position="183"/>
        <end position="186"/>
    </location>
</feature>
<feature type="helix" evidence="5">
    <location>
        <begin position="196"/>
        <end position="201"/>
    </location>
</feature>
<feature type="helix" evidence="5">
    <location>
        <begin position="202"/>
        <end position="210"/>
    </location>
</feature>
<feature type="strand" evidence="5">
    <location>
        <begin position="218"/>
        <end position="222"/>
    </location>
</feature>
<feature type="turn" evidence="5">
    <location>
        <begin position="224"/>
        <end position="226"/>
    </location>
</feature>
<feature type="helix" evidence="5">
    <location>
        <begin position="233"/>
        <end position="242"/>
    </location>
</feature>
<feature type="helix" evidence="5">
    <location>
        <begin position="243"/>
        <end position="245"/>
    </location>
</feature>
<feature type="helix" evidence="5">
    <location>
        <begin position="250"/>
        <end position="259"/>
    </location>
</feature>
<feature type="strand" evidence="5">
    <location>
        <begin position="262"/>
        <end position="267"/>
    </location>
</feature>
<feature type="helix" evidence="5">
    <location>
        <begin position="274"/>
        <end position="281"/>
    </location>
</feature>
<feature type="strand" evidence="5">
    <location>
        <begin position="287"/>
        <end position="289"/>
    </location>
</feature>
<feature type="helix" evidence="5">
    <location>
        <begin position="293"/>
        <end position="295"/>
    </location>
</feature>
<feature type="turn" evidence="5">
    <location>
        <begin position="296"/>
        <end position="300"/>
    </location>
</feature>
<sequence>MIALLAPGQGSQTEGMLSPWLQLPGAADQIAAWSKAADLDLARLGTTASTEEITDTAVAQPLIVAATLLAHQELARRCVLAGKDVIVAGHSVGEIAAYAIAGVIAADDAVALAATRGAEMAKACATEPTGMSAVLGGDETEVLSRLEQLDLVPANRNAAGQIVAAGRLTALEKLAEDPPAKARVRALGVAGAFHTEFMAPALDGFAAAAANIATADPTATLLSNRDGKPVTSAAAAMDTLVSQLTQPVRWDLCTATLREHTVTAIVEFPPAGTLSGIAKRELRGVPARAVKSPADLDELANL</sequence>
<comment type="catalytic activity">
    <reaction>
        <text>holo-[ACP] + malonyl-CoA = malonyl-[ACP] + CoA</text>
        <dbReference type="Rhea" id="RHEA:41792"/>
        <dbReference type="Rhea" id="RHEA-COMP:9623"/>
        <dbReference type="Rhea" id="RHEA-COMP:9685"/>
        <dbReference type="ChEBI" id="CHEBI:57287"/>
        <dbReference type="ChEBI" id="CHEBI:57384"/>
        <dbReference type="ChEBI" id="CHEBI:64479"/>
        <dbReference type="ChEBI" id="CHEBI:78449"/>
        <dbReference type="EC" id="2.3.1.39"/>
    </reaction>
</comment>
<comment type="pathway">
    <text>Lipid metabolism; fatty acid biosynthesis.</text>
</comment>
<comment type="PTM">
    <text evidence="2 3">Pupylated at Lys-173 by the prokaryotic ubiquitin-like protein Pup, which leads to its degradation by the proteasome.</text>
</comment>
<comment type="miscellaneous">
    <text>Was identified as a natural substrate of the M.tuberculosis proteasome.</text>
</comment>
<comment type="miscellaneous">
    <text>Was identified as a high-confidence drug target.</text>
</comment>
<comment type="similarity">
    <text evidence="4">Belongs to the FabD family.</text>
</comment>
<dbReference type="EC" id="2.3.1.39"/>
<dbReference type="EMBL" id="AL123456">
    <property type="protein sequence ID" value="CCP45023.1"/>
    <property type="molecule type" value="Genomic_DNA"/>
</dbReference>
<dbReference type="PIR" id="G70778">
    <property type="entry name" value="G70778"/>
</dbReference>
<dbReference type="RefSeq" id="NP_216759.1">
    <property type="nucleotide sequence ID" value="NC_000962.3"/>
</dbReference>
<dbReference type="RefSeq" id="WP_003411559.1">
    <property type="nucleotide sequence ID" value="NZ_NVQJ01000008.1"/>
</dbReference>
<dbReference type="PDB" id="2QC3">
    <property type="method" value="X-ray"/>
    <property type="resolution" value="2.30 A"/>
    <property type="chains" value="A=1-302"/>
</dbReference>
<dbReference type="PDB" id="2QJ3">
    <property type="method" value="X-ray"/>
    <property type="resolution" value="3.00 A"/>
    <property type="chains" value="A/B=1-302"/>
</dbReference>
<dbReference type="PDBsum" id="2QC3"/>
<dbReference type="PDBsum" id="2QJ3"/>
<dbReference type="SMR" id="P9WNG5"/>
<dbReference type="FunCoup" id="P9WNG5">
    <property type="interactions" value="547"/>
</dbReference>
<dbReference type="STRING" id="83332.Rv2243"/>
<dbReference type="SwissLipids" id="SLP:000000965"/>
<dbReference type="PaxDb" id="83332-Rv2243"/>
<dbReference type="GeneID" id="888769"/>
<dbReference type="KEGG" id="mtu:Rv2243"/>
<dbReference type="KEGG" id="mtv:RVBD_2243"/>
<dbReference type="TubercuList" id="Rv2243"/>
<dbReference type="eggNOG" id="COG0331">
    <property type="taxonomic scope" value="Bacteria"/>
</dbReference>
<dbReference type="InParanoid" id="P9WNG5"/>
<dbReference type="OrthoDB" id="3248271at2"/>
<dbReference type="PhylomeDB" id="P9WNG5"/>
<dbReference type="BRENDA" id="2.3.1.39">
    <property type="organism ID" value="3445"/>
</dbReference>
<dbReference type="BRENDA" id="4.1.2.25">
    <property type="organism ID" value="3445"/>
</dbReference>
<dbReference type="UniPathway" id="UPA00094"/>
<dbReference type="EvolutionaryTrace" id="P9WNG5"/>
<dbReference type="Proteomes" id="UP000001584">
    <property type="component" value="Chromosome"/>
</dbReference>
<dbReference type="GO" id="GO:0005829">
    <property type="term" value="C:cytosol"/>
    <property type="evidence" value="ECO:0000318"/>
    <property type="project" value="GO_Central"/>
</dbReference>
<dbReference type="GO" id="GO:0005835">
    <property type="term" value="C:fatty acid synthase complex"/>
    <property type="evidence" value="ECO:0000314"/>
    <property type="project" value="MTBBASE"/>
</dbReference>
<dbReference type="GO" id="GO:0004314">
    <property type="term" value="F:[acyl-carrier-protein] S-malonyltransferase activity"/>
    <property type="evidence" value="ECO:0000314"/>
    <property type="project" value="MTBBASE"/>
</dbReference>
<dbReference type="GO" id="GO:0006633">
    <property type="term" value="P:fatty acid biosynthetic process"/>
    <property type="evidence" value="ECO:0000314"/>
    <property type="project" value="MTBBASE"/>
</dbReference>
<dbReference type="FunFam" id="3.30.70.250:FF:000002">
    <property type="entry name" value="Malonyl CoA-ACP transacylase"/>
    <property type="match status" value="1"/>
</dbReference>
<dbReference type="Gene3D" id="3.30.70.250">
    <property type="entry name" value="Malonyl-CoA ACP transacylase, ACP-binding"/>
    <property type="match status" value="1"/>
</dbReference>
<dbReference type="Gene3D" id="3.40.366.10">
    <property type="entry name" value="Malonyl-Coenzyme A Acyl Carrier Protein, domain 2"/>
    <property type="match status" value="1"/>
</dbReference>
<dbReference type="InterPro" id="IPR001227">
    <property type="entry name" value="Ac_transferase_dom_sf"/>
</dbReference>
<dbReference type="InterPro" id="IPR014043">
    <property type="entry name" value="Acyl_transferase_dom"/>
</dbReference>
<dbReference type="InterPro" id="IPR016035">
    <property type="entry name" value="Acyl_Trfase/lysoPLipase"/>
</dbReference>
<dbReference type="InterPro" id="IPR050858">
    <property type="entry name" value="Mal-CoA-ACP_Trans/PKS_FabD"/>
</dbReference>
<dbReference type="InterPro" id="IPR016036">
    <property type="entry name" value="Malonyl_transacylase_ACP-bd"/>
</dbReference>
<dbReference type="PANTHER" id="PTHR42681">
    <property type="entry name" value="MALONYL-COA-ACYL CARRIER PROTEIN TRANSACYLASE, MITOCHONDRIAL"/>
    <property type="match status" value="1"/>
</dbReference>
<dbReference type="PANTHER" id="PTHR42681:SF1">
    <property type="entry name" value="MALONYL-COA-ACYL CARRIER PROTEIN TRANSACYLASE, MITOCHONDRIAL"/>
    <property type="match status" value="1"/>
</dbReference>
<dbReference type="Pfam" id="PF00698">
    <property type="entry name" value="Acyl_transf_1"/>
    <property type="match status" value="1"/>
</dbReference>
<dbReference type="SMART" id="SM00827">
    <property type="entry name" value="PKS_AT"/>
    <property type="match status" value="1"/>
</dbReference>
<dbReference type="SUPFAM" id="SSF52151">
    <property type="entry name" value="FabD/lysophospholipase-like"/>
    <property type="match status" value="1"/>
</dbReference>
<dbReference type="SUPFAM" id="SSF55048">
    <property type="entry name" value="Probable ACP-binding domain of malonyl-CoA ACP transacylase"/>
    <property type="match status" value="1"/>
</dbReference>
<evidence type="ECO:0000250" key="1"/>
<evidence type="ECO:0000269" key="2">
    <source>
    </source>
</evidence>
<evidence type="ECO:0000269" key="3">
    <source>
    </source>
</evidence>
<evidence type="ECO:0000305" key="4"/>
<evidence type="ECO:0007829" key="5">
    <source>
        <dbReference type="PDB" id="2QC3"/>
    </source>
</evidence>
<name>FABD_MYCTU</name>